<dbReference type="EC" id="4.1.3.17"/>
<dbReference type="EC" id="4.1.1.112"/>
<dbReference type="EMBL" id="AM260479">
    <property type="protein sequence ID" value="CAJ93327.1"/>
    <property type="molecule type" value="Genomic_DNA"/>
</dbReference>
<dbReference type="RefSeq" id="WP_011615564.1">
    <property type="nucleotide sequence ID" value="NC_008313.1"/>
</dbReference>
<dbReference type="SMR" id="Q0K9J4"/>
<dbReference type="STRING" id="381666.H16_A2230"/>
<dbReference type="KEGG" id="reh:H16_A2230"/>
<dbReference type="PATRIC" id="fig|381666.6.peg.2634"/>
<dbReference type="eggNOG" id="COG0684">
    <property type="taxonomic scope" value="Bacteria"/>
</dbReference>
<dbReference type="HOGENOM" id="CLU_072626_4_0_4"/>
<dbReference type="OrthoDB" id="943692at2"/>
<dbReference type="Proteomes" id="UP000008210">
    <property type="component" value="Chromosome 1"/>
</dbReference>
<dbReference type="GO" id="GO:0047443">
    <property type="term" value="F:4-hydroxy-4-methyl-2-oxoglutarate aldolase activity"/>
    <property type="evidence" value="ECO:0007669"/>
    <property type="project" value="UniProtKB-EC"/>
</dbReference>
<dbReference type="GO" id="GO:0046872">
    <property type="term" value="F:metal ion binding"/>
    <property type="evidence" value="ECO:0007669"/>
    <property type="project" value="UniProtKB-KW"/>
</dbReference>
<dbReference type="GO" id="GO:0008948">
    <property type="term" value="F:oxaloacetate decarboxylase activity"/>
    <property type="evidence" value="ECO:0007669"/>
    <property type="project" value="UniProtKB-EC"/>
</dbReference>
<dbReference type="GO" id="GO:0008428">
    <property type="term" value="F:ribonuclease inhibitor activity"/>
    <property type="evidence" value="ECO:0007669"/>
    <property type="project" value="InterPro"/>
</dbReference>
<dbReference type="GO" id="GO:0051252">
    <property type="term" value="P:regulation of RNA metabolic process"/>
    <property type="evidence" value="ECO:0007669"/>
    <property type="project" value="InterPro"/>
</dbReference>
<dbReference type="CDD" id="cd16841">
    <property type="entry name" value="RraA_family"/>
    <property type="match status" value="1"/>
</dbReference>
<dbReference type="Gene3D" id="3.50.30.40">
    <property type="entry name" value="Ribonuclease E inhibitor RraA/RraA-like"/>
    <property type="match status" value="1"/>
</dbReference>
<dbReference type="InterPro" id="IPR010203">
    <property type="entry name" value="RraA"/>
</dbReference>
<dbReference type="InterPro" id="IPR005493">
    <property type="entry name" value="RraA/RraA-like"/>
</dbReference>
<dbReference type="InterPro" id="IPR036704">
    <property type="entry name" value="RraA/RraA-like_sf"/>
</dbReference>
<dbReference type="NCBIfam" id="TIGR01935">
    <property type="entry name" value="NOT-MenG"/>
    <property type="match status" value="1"/>
</dbReference>
<dbReference type="NCBIfam" id="NF006875">
    <property type="entry name" value="PRK09372.1"/>
    <property type="match status" value="1"/>
</dbReference>
<dbReference type="PANTHER" id="PTHR33254">
    <property type="entry name" value="4-HYDROXY-4-METHYL-2-OXOGLUTARATE ALDOLASE 3-RELATED"/>
    <property type="match status" value="1"/>
</dbReference>
<dbReference type="PANTHER" id="PTHR33254:SF4">
    <property type="entry name" value="4-HYDROXY-4-METHYL-2-OXOGLUTARATE ALDOLASE 3-RELATED"/>
    <property type="match status" value="1"/>
</dbReference>
<dbReference type="Pfam" id="PF03737">
    <property type="entry name" value="RraA-like"/>
    <property type="match status" value="1"/>
</dbReference>
<dbReference type="SUPFAM" id="SSF89562">
    <property type="entry name" value="RraA-like"/>
    <property type="match status" value="1"/>
</dbReference>
<name>RRAAH_CUPNH</name>
<reference key="1">
    <citation type="journal article" date="2006" name="Nat. Biotechnol.">
        <title>Genome sequence of the bioplastic-producing 'Knallgas' bacterium Ralstonia eutropha H16.</title>
        <authorList>
            <person name="Pohlmann A."/>
            <person name="Fricke W.F."/>
            <person name="Reinecke F."/>
            <person name="Kusian B."/>
            <person name="Liesegang H."/>
            <person name="Cramm R."/>
            <person name="Eitinger T."/>
            <person name="Ewering C."/>
            <person name="Poetter M."/>
            <person name="Schwartz E."/>
            <person name="Strittmatter A."/>
            <person name="Voss I."/>
            <person name="Gottschalk G."/>
            <person name="Steinbuechel A."/>
            <person name="Friedrich B."/>
            <person name="Bowien B."/>
        </authorList>
    </citation>
    <scope>NUCLEOTIDE SEQUENCE [LARGE SCALE GENOMIC DNA]</scope>
    <source>
        <strain>ATCC 17699 / DSM 428 / KCTC 22496 / NCIMB 10442 / H16 / Stanier 337</strain>
    </source>
</reference>
<protein>
    <recommendedName>
        <fullName>Putative 4-hydroxy-4-methyl-2-oxoglutarate aldolase</fullName>
        <shortName>HMG aldolase</shortName>
        <ecNumber>4.1.3.17</ecNumber>
    </recommendedName>
    <alternativeName>
        <fullName>Oxaloacetate decarboxylase</fullName>
        <shortName>OAA decarboxylase</shortName>
        <ecNumber>4.1.1.112</ecNumber>
    </alternativeName>
    <alternativeName>
        <fullName>Regulator of ribonuclease activity homolog</fullName>
    </alternativeName>
    <alternativeName>
        <fullName>RraA-like protein</fullName>
    </alternativeName>
</protein>
<evidence type="ECO:0000250" key="1"/>
<evidence type="ECO:0000305" key="2"/>
<proteinExistence type="inferred from homology"/>
<sequence>MKPVTTDLCDAHEDRLADGTLRVMAPVFRAFGKQGAFAGPAATLKVFEDNSLVRTALEAPGQGRVLVIDGGGSLRCALVGGNLGLLAEKNGWVGIVVNGCIRDTAELDVCDIGIRALAVHPQKSQKRNVGESDVAVQMPGAVVRPGNWIYVDADGVLVSDERLGN</sequence>
<accession>Q0K9J4</accession>
<comment type="function">
    <text evidence="1">Catalyzes the aldol cleavage of 4-hydroxy-4-methyl-2-oxoglutarate (HMG) into 2 molecules of pyruvate. Also contains a secondary oxaloacetate (OAA) decarboxylase activity due to the common pyruvate enolate transition state formed following C-C bond cleavage in the retro-aldol and decarboxylation reactions (By similarity).</text>
</comment>
<comment type="catalytic activity">
    <reaction>
        <text>4-hydroxy-4-methyl-2-oxoglutarate = 2 pyruvate</text>
        <dbReference type="Rhea" id="RHEA:22748"/>
        <dbReference type="ChEBI" id="CHEBI:15361"/>
        <dbReference type="ChEBI" id="CHEBI:58276"/>
        <dbReference type="EC" id="4.1.3.17"/>
    </reaction>
</comment>
<comment type="catalytic activity">
    <reaction>
        <text>oxaloacetate + H(+) = pyruvate + CO2</text>
        <dbReference type="Rhea" id="RHEA:15641"/>
        <dbReference type="ChEBI" id="CHEBI:15361"/>
        <dbReference type="ChEBI" id="CHEBI:15378"/>
        <dbReference type="ChEBI" id="CHEBI:16452"/>
        <dbReference type="ChEBI" id="CHEBI:16526"/>
        <dbReference type="EC" id="4.1.1.112"/>
    </reaction>
</comment>
<comment type="cofactor">
    <cofactor evidence="1">
        <name>a divalent metal cation</name>
        <dbReference type="ChEBI" id="CHEBI:60240"/>
    </cofactor>
    <text evidence="1">Divalent metal cation.</text>
</comment>
<comment type="subunit">
    <text evidence="1">Homotrimer.</text>
</comment>
<comment type="similarity">
    <text evidence="2">Belongs to the class II aldolase/RraA-like family.</text>
</comment>
<keyword id="KW-0456">Lyase</keyword>
<keyword id="KW-0479">Metal-binding</keyword>
<keyword id="KW-1185">Reference proteome</keyword>
<feature type="chain" id="PRO_1000013867" description="Putative 4-hydroxy-4-methyl-2-oxoglutarate aldolase">
    <location>
        <begin position="1"/>
        <end position="165"/>
    </location>
</feature>
<feature type="binding site" evidence="1">
    <location>
        <begin position="80"/>
        <end position="83"/>
    </location>
    <ligand>
        <name>substrate</name>
    </ligand>
</feature>
<feature type="binding site" evidence="1">
    <location>
        <position position="102"/>
    </location>
    <ligand>
        <name>substrate</name>
    </ligand>
</feature>
<feature type="binding site" evidence="1">
    <location>
        <position position="103"/>
    </location>
    <ligand>
        <name>a divalent metal cation</name>
        <dbReference type="ChEBI" id="CHEBI:60240"/>
    </ligand>
</feature>
<organism>
    <name type="scientific">Cupriavidus necator (strain ATCC 17699 / DSM 428 / KCTC 22496 / NCIMB 10442 / H16 / Stanier 337)</name>
    <name type="common">Ralstonia eutropha</name>
    <dbReference type="NCBI Taxonomy" id="381666"/>
    <lineage>
        <taxon>Bacteria</taxon>
        <taxon>Pseudomonadati</taxon>
        <taxon>Pseudomonadota</taxon>
        <taxon>Betaproteobacteria</taxon>
        <taxon>Burkholderiales</taxon>
        <taxon>Burkholderiaceae</taxon>
        <taxon>Cupriavidus</taxon>
    </lineage>
</organism>
<gene>
    <name type="ordered locus">H16_A2230</name>
</gene>